<keyword id="KW-0963">Cytoplasm</keyword>
<keyword id="KW-0456">Lyase</keyword>
<keyword id="KW-0704">Schiff base</keyword>
<protein>
    <recommendedName>
        <fullName evidence="1">Deoxyribose-phosphate aldolase</fullName>
        <shortName evidence="1">DERA</shortName>
        <ecNumber evidence="1">4.1.2.4</ecNumber>
    </recommendedName>
    <alternativeName>
        <fullName evidence="1">2-deoxy-D-ribose 5-phosphate aldolase</fullName>
    </alternativeName>
    <alternativeName>
        <fullName evidence="1">Phosphodeoxyriboaldolase</fullName>
        <shortName evidence="1">Deoxyriboaldolase</shortName>
    </alternativeName>
</protein>
<reference key="1">
    <citation type="journal article" date="2006" name="J. Bacteriol.">
        <title>Pathogenomic sequence analysis of Bacillus cereus and Bacillus thuringiensis isolates closely related to Bacillus anthracis.</title>
        <authorList>
            <person name="Han C.S."/>
            <person name="Xie G."/>
            <person name="Challacombe J.F."/>
            <person name="Altherr M.R."/>
            <person name="Bhotika S.S."/>
            <person name="Bruce D."/>
            <person name="Campbell C.S."/>
            <person name="Campbell M.L."/>
            <person name="Chen J."/>
            <person name="Chertkov O."/>
            <person name="Cleland C."/>
            <person name="Dimitrijevic M."/>
            <person name="Doggett N.A."/>
            <person name="Fawcett J.J."/>
            <person name="Glavina T."/>
            <person name="Goodwin L.A."/>
            <person name="Hill K.K."/>
            <person name="Hitchcock P."/>
            <person name="Jackson P.J."/>
            <person name="Keim P."/>
            <person name="Kewalramani A.R."/>
            <person name="Longmire J."/>
            <person name="Lucas S."/>
            <person name="Malfatti S."/>
            <person name="McMurry K."/>
            <person name="Meincke L.J."/>
            <person name="Misra M."/>
            <person name="Moseman B.L."/>
            <person name="Mundt M."/>
            <person name="Munk A.C."/>
            <person name="Okinaka R.T."/>
            <person name="Parson-Quintana B."/>
            <person name="Reilly L.P."/>
            <person name="Richardson P."/>
            <person name="Robinson D.L."/>
            <person name="Rubin E."/>
            <person name="Saunders E."/>
            <person name="Tapia R."/>
            <person name="Tesmer J.G."/>
            <person name="Thayer N."/>
            <person name="Thompson L.S."/>
            <person name="Tice H."/>
            <person name="Ticknor L.O."/>
            <person name="Wills P.L."/>
            <person name="Brettin T.S."/>
            <person name="Gilna P."/>
        </authorList>
    </citation>
    <scope>NUCLEOTIDE SEQUENCE [LARGE SCALE GENOMIC DNA]</scope>
    <source>
        <strain>ZK / E33L</strain>
    </source>
</reference>
<accession>Q63CR9</accession>
<name>DEOC_BACCZ</name>
<gene>
    <name evidence="1" type="primary">deoC</name>
    <name type="ordered locus">BCE33L1703</name>
</gene>
<sequence>MNIAKLIDHTILKANTTKEDVMKVIEEAKEYKFASVCINPTWVKLAAEELAGHDVDVCTVIGFPLGASTTETKAFETKDAIAKGATEVDMVINVGALKDGDNELVEKDIYEVVQAAKGKALVKVIIETCLLTDEEKVRACELSVKAGADFVKTSTGFSTGGATAEDIALMRKTVGPNVGVKASGGVRTREDAEKMVAAGASRVGASASVAIVLNDAKGATDNY</sequence>
<feature type="chain" id="PRO_0000231529" description="Deoxyribose-phosphate aldolase">
    <location>
        <begin position="1"/>
        <end position="223"/>
    </location>
</feature>
<feature type="active site" description="Proton donor/acceptor" evidence="1">
    <location>
        <position position="89"/>
    </location>
</feature>
<feature type="active site" description="Schiff-base intermediate with acetaldehyde" evidence="1">
    <location>
        <position position="152"/>
    </location>
</feature>
<feature type="active site" description="Proton donor/acceptor" evidence="1">
    <location>
        <position position="181"/>
    </location>
</feature>
<evidence type="ECO:0000255" key="1">
    <source>
        <dbReference type="HAMAP-Rule" id="MF_00114"/>
    </source>
</evidence>
<proteinExistence type="inferred from homology"/>
<organism>
    <name type="scientific">Bacillus cereus (strain ZK / E33L)</name>
    <dbReference type="NCBI Taxonomy" id="288681"/>
    <lineage>
        <taxon>Bacteria</taxon>
        <taxon>Bacillati</taxon>
        <taxon>Bacillota</taxon>
        <taxon>Bacilli</taxon>
        <taxon>Bacillales</taxon>
        <taxon>Bacillaceae</taxon>
        <taxon>Bacillus</taxon>
        <taxon>Bacillus cereus group</taxon>
    </lineage>
</organism>
<dbReference type="EC" id="4.1.2.4" evidence="1"/>
<dbReference type="EMBL" id="CP000001">
    <property type="protein sequence ID" value="AAU18549.1"/>
    <property type="molecule type" value="Genomic_DNA"/>
</dbReference>
<dbReference type="RefSeq" id="WP_001017446.1">
    <property type="nucleotide sequence ID" value="NZ_CP009968.1"/>
</dbReference>
<dbReference type="SMR" id="Q63CR9"/>
<dbReference type="GeneID" id="45021821"/>
<dbReference type="KEGG" id="bcz:BCE33L1703"/>
<dbReference type="PATRIC" id="fig|288681.22.peg.3835"/>
<dbReference type="UniPathway" id="UPA00002">
    <property type="reaction ID" value="UER00468"/>
</dbReference>
<dbReference type="Proteomes" id="UP000002612">
    <property type="component" value="Chromosome"/>
</dbReference>
<dbReference type="GO" id="GO:0005737">
    <property type="term" value="C:cytoplasm"/>
    <property type="evidence" value="ECO:0007669"/>
    <property type="project" value="UniProtKB-SubCell"/>
</dbReference>
<dbReference type="GO" id="GO:0004139">
    <property type="term" value="F:deoxyribose-phosphate aldolase activity"/>
    <property type="evidence" value="ECO:0007669"/>
    <property type="project" value="UniProtKB-UniRule"/>
</dbReference>
<dbReference type="GO" id="GO:0006018">
    <property type="term" value="P:2-deoxyribose 1-phosphate catabolic process"/>
    <property type="evidence" value="ECO:0007669"/>
    <property type="project" value="UniProtKB-UniRule"/>
</dbReference>
<dbReference type="GO" id="GO:0016052">
    <property type="term" value="P:carbohydrate catabolic process"/>
    <property type="evidence" value="ECO:0007669"/>
    <property type="project" value="TreeGrafter"/>
</dbReference>
<dbReference type="GO" id="GO:0009264">
    <property type="term" value="P:deoxyribonucleotide catabolic process"/>
    <property type="evidence" value="ECO:0007669"/>
    <property type="project" value="InterPro"/>
</dbReference>
<dbReference type="CDD" id="cd00959">
    <property type="entry name" value="DeoC"/>
    <property type="match status" value="1"/>
</dbReference>
<dbReference type="FunFam" id="3.20.20.70:FF:000044">
    <property type="entry name" value="Deoxyribose-phosphate aldolase"/>
    <property type="match status" value="1"/>
</dbReference>
<dbReference type="Gene3D" id="3.20.20.70">
    <property type="entry name" value="Aldolase class I"/>
    <property type="match status" value="1"/>
</dbReference>
<dbReference type="HAMAP" id="MF_00114">
    <property type="entry name" value="DeoC_type1"/>
    <property type="match status" value="1"/>
</dbReference>
<dbReference type="InterPro" id="IPR013785">
    <property type="entry name" value="Aldolase_TIM"/>
</dbReference>
<dbReference type="InterPro" id="IPR011343">
    <property type="entry name" value="DeoC"/>
</dbReference>
<dbReference type="InterPro" id="IPR002915">
    <property type="entry name" value="DeoC/FbaB/LacD_aldolase"/>
</dbReference>
<dbReference type="InterPro" id="IPR028581">
    <property type="entry name" value="DeoC_typeI"/>
</dbReference>
<dbReference type="NCBIfam" id="TIGR00126">
    <property type="entry name" value="deoC"/>
    <property type="match status" value="1"/>
</dbReference>
<dbReference type="PANTHER" id="PTHR10889">
    <property type="entry name" value="DEOXYRIBOSE-PHOSPHATE ALDOLASE"/>
    <property type="match status" value="1"/>
</dbReference>
<dbReference type="PANTHER" id="PTHR10889:SF1">
    <property type="entry name" value="DEOXYRIBOSE-PHOSPHATE ALDOLASE"/>
    <property type="match status" value="1"/>
</dbReference>
<dbReference type="Pfam" id="PF01791">
    <property type="entry name" value="DeoC"/>
    <property type="match status" value="1"/>
</dbReference>
<dbReference type="PIRSF" id="PIRSF001357">
    <property type="entry name" value="DeoC"/>
    <property type="match status" value="1"/>
</dbReference>
<dbReference type="SMART" id="SM01133">
    <property type="entry name" value="DeoC"/>
    <property type="match status" value="1"/>
</dbReference>
<dbReference type="SUPFAM" id="SSF51569">
    <property type="entry name" value="Aldolase"/>
    <property type="match status" value="1"/>
</dbReference>
<comment type="function">
    <text evidence="1">Catalyzes a reversible aldol reaction between acetaldehyde and D-glyceraldehyde 3-phosphate to generate 2-deoxy-D-ribose 5-phosphate.</text>
</comment>
<comment type="catalytic activity">
    <reaction evidence="1">
        <text>2-deoxy-D-ribose 5-phosphate = D-glyceraldehyde 3-phosphate + acetaldehyde</text>
        <dbReference type="Rhea" id="RHEA:12821"/>
        <dbReference type="ChEBI" id="CHEBI:15343"/>
        <dbReference type="ChEBI" id="CHEBI:59776"/>
        <dbReference type="ChEBI" id="CHEBI:62877"/>
        <dbReference type="EC" id="4.1.2.4"/>
    </reaction>
</comment>
<comment type="pathway">
    <text evidence="1">Carbohydrate degradation; 2-deoxy-D-ribose 1-phosphate degradation; D-glyceraldehyde 3-phosphate and acetaldehyde from 2-deoxy-alpha-D-ribose 1-phosphate: step 2/2.</text>
</comment>
<comment type="subcellular location">
    <subcellularLocation>
        <location evidence="1">Cytoplasm</location>
    </subcellularLocation>
</comment>
<comment type="similarity">
    <text evidence="1">Belongs to the DeoC/FbaB aldolase family. DeoC type 1 subfamily.</text>
</comment>